<keyword id="KW-0028">Amino-acid biosynthesis</keyword>
<keyword id="KW-0057">Aromatic amino acid biosynthesis</keyword>
<keyword id="KW-0170">Cobalt</keyword>
<keyword id="KW-0963">Cytoplasm</keyword>
<keyword id="KW-0456">Lyase</keyword>
<keyword id="KW-0479">Metal-binding</keyword>
<keyword id="KW-0520">NAD</keyword>
<keyword id="KW-0547">Nucleotide-binding</keyword>
<keyword id="KW-1185">Reference proteome</keyword>
<keyword id="KW-0862">Zinc</keyword>
<proteinExistence type="inferred from homology"/>
<dbReference type="EC" id="4.2.3.4" evidence="1"/>
<dbReference type="EMBL" id="CU468135">
    <property type="protein sequence ID" value="CAO98251.1"/>
    <property type="molecule type" value="Genomic_DNA"/>
</dbReference>
<dbReference type="RefSeq" id="WP_012442881.1">
    <property type="nucleotide sequence ID" value="NC_010694.1"/>
</dbReference>
<dbReference type="SMR" id="B2VJW7"/>
<dbReference type="STRING" id="465817.ETA_32050"/>
<dbReference type="KEGG" id="eta:ETA_32050"/>
<dbReference type="eggNOG" id="COG0337">
    <property type="taxonomic scope" value="Bacteria"/>
</dbReference>
<dbReference type="HOGENOM" id="CLU_001201_0_2_6"/>
<dbReference type="OrthoDB" id="9806583at2"/>
<dbReference type="UniPathway" id="UPA00053">
    <property type="reaction ID" value="UER00085"/>
</dbReference>
<dbReference type="Proteomes" id="UP000001726">
    <property type="component" value="Chromosome"/>
</dbReference>
<dbReference type="GO" id="GO:0005737">
    <property type="term" value="C:cytoplasm"/>
    <property type="evidence" value="ECO:0007669"/>
    <property type="project" value="UniProtKB-SubCell"/>
</dbReference>
<dbReference type="GO" id="GO:0003856">
    <property type="term" value="F:3-dehydroquinate synthase activity"/>
    <property type="evidence" value="ECO:0007669"/>
    <property type="project" value="UniProtKB-UniRule"/>
</dbReference>
<dbReference type="GO" id="GO:0046872">
    <property type="term" value="F:metal ion binding"/>
    <property type="evidence" value="ECO:0007669"/>
    <property type="project" value="UniProtKB-KW"/>
</dbReference>
<dbReference type="GO" id="GO:0000166">
    <property type="term" value="F:nucleotide binding"/>
    <property type="evidence" value="ECO:0007669"/>
    <property type="project" value="UniProtKB-KW"/>
</dbReference>
<dbReference type="GO" id="GO:0008652">
    <property type="term" value="P:amino acid biosynthetic process"/>
    <property type="evidence" value="ECO:0007669"/>
    <property type="project" value="UniProtKB-KW"/>
</dbReference>
<dbReference type="GO" id="GO:0009073">
    <property type="term" value="P:aromatic amino acid family biosynthetic process"/>
    <property type="evidence" value="ECO:0007669"/>
    <property type="project" value="UniProtKB-KW"/>
</dbReference>
<dbReference type="GO" id="GO:0009423">
    <property type="term" value="P:chorismate biosynthetic process"/>
    <property type="evidence" value="ECO:0007669"/>
    <property type="project" value="UniProtKB-UniRule"/>
</dbReference>
<dbReference type="CDD" id="cd08195">
    <property type="entry name" value="DHQS"/>
    <property type="match status" value="1"/>
</dbReference>
<dbReference type="FunFam" id="1.20.1090.10:FF:000002">
    <property type="entry name" value="3-dehydroquinate synthase"/>
    <property type="match status" value="1"/>
</dbReference>
<dbReference type="FunFam" id="3.40.50.1970:FF:000001">
    <property type="entry name" value="3-dehydroquinate synthase"/>
    <property type="match status" value="1"/>
</dbReference>
<dbReference type="Gene3D" id="3.40.50.1970">
    <property type="match status" value="1"/>
</dbReference>
<dbReference type="Gene3D" id="1.20.1090.10">
    <property type="entry name" value="Dehydroquinate synthase-like - alpha domain"/>
    <property type="match status" value="1"/>
</dbReference>
<dbReference type="HAMAP" id="MF_00110">
    <property type="entry name" value="DHQ_synthase"/>
    <property type="match status" value="1"/>
</dbReference>
<dbReference type="InterPro" id="IPR050071">
    <property type="entry name" value="Dehydroquinate_synthase"/>
</dbReference>
<dbReference type="InterPro" id="IPR016037">
    <property type="entry name" value="DHQ_synth_AroB"/>
</dbReference>
<dbReference type="InterPro" id="IPR030963">
    <property type="entry name" value="DHQ_synth_fam"/>
</dbReference>
<dbReference type="InterPro" id="IPR030960">
    <property type="entry name" value="DHQS/DOIS_N"/>
</dbReference>
<dbReference type="InterPro" id="IPR056179">
    <property type="entry name" value="DHQS_C"/>
</dbReference>
<dbReference type="NCBIfam" id="TIGR01357">
    <property type="entry name" value="aroB"/>
    <property type="match status" value="1"/>
</dbReference>
<dbReference type="PANTHER" id="PTHR43622">
    <property type="entry name" value="3-DEHYDROQUINATE SYNTHASE"/>
    <property type="match status" value="1"/>
</dbReference>
<dbReference type="PANTHER" id="PTHR43622:SF7">
    <property type="entry name" value="3-DEHYDROQUINATE SYNTHASE, CHLOROPLASTIC"/>
    <property type="match status" value="1"/>
</dbReference>
<dbReference type="Pfam" id="PF01761">
    <property type="entry name" value="DHQ_synthase"/>
    <property type="match status" value="1"/>
</dbReference>
<dbReference type="Pfam" id="PF24621">
    <property type="entry name" value="DHQS_C"/>
    <property type="match status" value="1"/>
</dbReference>
<dbReference type="PIRSF" id="PIRSF001455">
    <property type="entry name" value="DHQ_synth"/>
    <property type="match status" value="1"/>
</dbReference>
<dbReference type="SUPFAM" id="SSF56796">
    <property type="entry name" value="Dehydroquinate synthase-like"/>
    <property type="match status" value="1"/>
</dbReference>
<feature type="chain" id="PRO_1000094516" description="3-dehydroquinate synthase">
    <location>
        <begin position="1"/>
        <end position="360"/>
    </location>
</feature>
<feature type="binding site" evidence="1">
    <location>
        <begin position="71"/>
        <end position="76"/>
    </location>
    <ligand>
        <name>NAD(+)</name>
        <dbReference type="ChEBI" id="CHEBI:57540"/>
    </ligand>
</feature>
<feature type="binding site" evidence="1">
    <location>
        <begin position="105"/>
        <end position="109"/>
    </location>
    <ligand>
        <name>NAD(+)</name>
        <dbReference type="ChEBI" id="CHEBI:57540"/>
    </ligand>
</feature>
<feature type="binding site" evidence="1">
    <location>
        <begin position="129"/>
        <end position="130"/>
    </location>
    <ligand>
        <name>NAD(+)</name>
        <dbReference type="ChEBI" id="CHEBI:57540"/>
    </ligand>
</feature>
<feature type="binding site" evidence="1">
    <location>
        <position position="142"/>
    </location>
    <ligand>
        <name>NAD(+)</name>
        <dbReference type="ChEBI" id="CHEBI:57540"/>
    </ligand>
</feature>
<feature type="binding site" evidence="1">
    <location>
        <position position="151"/>
    </location>
    <ligand>
        <name>NAD(+)</name>
        <dbReference type="ChEBI" id="CHEBI:57540"/>
    </ligand>
</feature>
<feature type="binding site" evidence="1">
    <location>
        <begin position="169"/>
        <end position="172"/>
    </location>
    <ligand>
        <name>NAD(+)</name>
        <dbReference type="ChEBI" id="CHEBI:57540"/>
    </ligand>
</feature>
<feature type="binding site" evidence="1">
    <location>
        <position position="184"/>
    </location>
    <ligand>
        <name>Zn(2+)</name>
        <dbReference type="ChEBI" id="CHEBI:29105"/>
    </ligand>
</feature>
<feature type="binding site" evidence="1">
    <location>
        <position position="247"/>
    </location>
    <ligand>
        <name>Zn(2+)</name>
        <dbReference type="ChEBI" id="CHEBI:29105"/>
    </ligand>
</feature>
<feature type="binding site" evidence="1">
    <location>
        <position position="264"/>
    </location>
    <ligand>
        <name>Zn(2+)</name>
        <dbReference type="ChEBI" id="CHEBI:29105"/>
    </ligand>
</feature>
<protein>
    <recommendedName>
        <fullName evidence="1">3-dehydroquinate synthase</fullName>
        <shortName evidence="1">DHQS</shortName>
        <ecNumber evidence="1">4.2.3.4</ecNumber>
    </recommendedName>
</protein>
<evidence type="ECO:0000255" key="1">
    <source>
        <dbReference type="HAMAP-Rule" id="MF_00110"/>
    </source>
</evidence>
<gene>
    <name evidence="1" type="primary">aroB</name>
    <name type="ordered locus">ETA_32050</name>
</gene>
<name>AROB_ERWT9</name>
<organism>
    <name type="scientific">Erwinia tasmaniensis (strain DSM 17950 / CFBP 7177 / CIP 109463 / NCPPB 4357 / Et1/99)</name>
    <dbReference type="NCBI Taxonomy" id="465817"/>
    <lineage>
        <taxon>Bacteria</taxon>
        <taxon>Pseudomonadati</taxon>
        <taxon>Pseudomonadota</taxon>
        <taxon>Gammaproteobacteria</taxon>
        <taxon>Enterobacterales</taxon>
        <taxon>Erwiniaceae</taxon>
        <taxon>Erwinia</taxon>
    </lineage>
</organism>
<accession>B2VJW7</accession>
<reference key="1">
    <citation type="journal article" date="2008" name="Environ. Microbiol.">
        <title>The genome of Erwinia tasmaniensis strain Et1/99, a non-pathogenic bacterium in the genus Erwinia.</title>
        <authorList>
            <person name="Kube M."/>
            <person name="Migdoll A.M."/>
            <person name="Mueller I."/>
            <person name="Kuhl H."/>
            <person name="Beck A."/>
            <person name="Reinhardt R."/>
            <person name="Geider K."/>
        </authorList>
    </citation>
    <scope>NUCLEOTIDE SEQUENCE [LARGE SCALE GENOMIC DNA]</scope>
    <source>
        <strain>DSM 17950 / CFBP 7177 / CIP 109463 / NCPPB 4357 / Et1/99</strain>
    </source>
</reference>
<comment type="function">
    <text evidence="1">Catalyzes the conversion of 3-deoxy-D-arabino-heptulosonate 7-phosphate (DAHP) to dehydroquinate (DHQ).</text>
</comment>
<comment type="catalytic activity">
    <reaction evidence="1">
        <text>7-phospho-2-dehydro-3-deoxy-D-arabino-heptonate = 3-dehydroquinate + phosphate</text>
        <dbReference type="Rhea" id="RHEA:21968"/>
        <dbReference type="ChEBI" id="CHEBI:32364"/>
        <dbReference type="ChEBI" id="CHEBI:43474"/>
        <dbReference type="ChEBI" id="CHEBI:58394"/>
        <dbReference type="EC" id="4.2.3.4"/>
    </reaction>
</comment>
<comment type="cofactor">
    <cofactor evidence="1">
        <name>Co(2+)</name>
        <dbReference type="ChEBI" id="CHEBI:48828"/>
    </cofactor>
    <cofactor evidence="1">
        <name>Zn(2+)</name>
        <dbReference type="ChEBI" id="CHEBI:29105"/>
    </cofactor>
    <text evidence="1">Binds 1 divalent metal cation per subunit. Can use either Co(2+) or Zn(2+).</text>
</comment>
<comment type="cofactor">
    <cofactor evidence="1">
        <name>NAD(+)</name>
        <dbReference type="ChEBI" id="CHEBI:57540"/>
    </cofactor>
</comment>
<comment type="pathway">
    <text evidence="1">Metabolic intermediate biosynthesis; chorismate biosynthesis; chorismate from D-erythrose 4-phosphate and phosphoenolpyruvate: step 2/7.</text>
</comment>
<comment type="subcellular location">
    <subcellularLocation>
        <location evidence="1">Cytoplasm</location>
    </subcellularLocation>
</comment>
<comment type="similarity">
    <text evidence="1">Belongs to the sugar phosphate cyclases superfamily. Dehydroquinate synthase family.</text>
</comment>
<sequence length="360" mass="38930">MERITVTLGERSYPITIAAGLFSDPTSFWPLKAGEQAMLVTNQTLAPLYLDTLCARLEGAGVIVDRVILPDGEQYKTLAVMDQVFSALLAKPHGRDTTLIALGGGVIGDLTGFAAASYQRGVRFIQVPTTLLSQVDSSVGGKTAVNHPLGKNMIGAFYQPAAVVVDLDCLDTLPARELSSGLAEVIKYGIILDGDFFSWLEKNLDALLALDGTAMSRCIRRCCELKAEVVAADEHEHGLRALLNLGHTYGHAIEAHMGYGNWLHGEAVAAGMVMAARTAERLGQFNPQDTDRIISLLQRAGLPVKGPESMTAEEYLPHMMRDKKVLAGEMRLVLPLEIGRAELRRGVAHDIVLASIRDCQ</sequence>